<evidence type="ECO:0000250" key="1">
    <source>
        <dbReference type="UniProtKB" id="P20816"/>
    </source>
</evidence>
<evidence type="ECO:0000255" key="2"/>
<evidence type="ECO:0000269" key="3">
    <source>
    </source>
</evidence>
<evidence type="ECO:0000269" key="4">
    <source>
    </source>
</evidence>
<evidence type="ECO:0000269" key="5">
    <source>
    </source>
</evidence>
<evidence type="ECO:0000269" key="6">
    <source>
    </source>
</evidence>
<evidence type="ECO:0000303" key="7">
    <source>
    </source>
</evidence>
<evidence type="ECO:0000305" key="8"/>
<evidence type="ECO:0000305" key="9">
    <source>
    </source>
</evidence>
<evidence type="ECO:0000305" key="10">
    <source>
    </source>
</evidence>
<evidence type="ECO:0000305" key="11">
    <source>
    </source>
</evidence>
<accession>P24464</accession>
<accession>Q642E9</accession>
<dbReference type="EC" id="1.14.14.1" evidence="3 4 6"/>
<dbReference type="EMBL" id="M37828">
    <property type="protein sequence ID" value="AAA63485.1"/>
    <property type="molecule type" value="mRNA"/>
</dbReference>
<dbReference type="EMBL" id="BC081771">
    <property type="protein sequence ID" value="AAH81771.1"/>
    <property type="molecule type" value="mRNA"/>
</dbReference>
<dbReference type="PIR" id="A36304">
    <property type="entry name" value="A36304"/>
</dbReference>
<dbReference type="PIR" id="PC4352">
    <property type="entry name" value="PC4352"/>
</dbReference>
<dbReference type="RefSeq" id="NP_113793.2">
    <property type="nucleotide sequence ID" value="NM_031605.2"/>
</dbReference>
<dbReference type="SMR" id="P24464"/>
<dbReference type="FunCoup" id="P24464">
    <property type="interactions" value="100"/>
</dbReference>
<dbReference type="STRING" id="10116.ENSRNOP00000012448"/>
<dbReference type="SwissLipids" id="SLP:000000745"/>
<dbReference type="iPTMnet" id="P24464"/>
<dbReference type="PhosphoSitePlus" id="P24464"/>
<dbReference type="PaxDb" id="10116-ENSRNOP00000012448"/>
<dbReference type="Ensembl" id="ENSRNOT00000012448.6">
    <property type="protein sequence ID" value="ENSRNOP00000012448.4"/>
    <property type="gene ID" value="ENSRNOG00000008842.5"/>
</dbReference>
<dbReference type="GeneID" id="266674"/>
<dbReference type="KEGG" id="rno:266674"/>
<dbReference type="UCSC" id="RGD:628846">
    <property type="organism name" value="rat"/>
</dbReference>
<dbReference type="AGR" id="RGD:628846"/>
<dbReference type="CTD" id="266674"/>
<dbReference type="RGD" id="628846">
    <property type="gene designation" value="Cyp4a8"/>
</dbReference>
<dbReference type="eggNOG" id="KOG0157">
    <property type="taxonomic scope" value="Eukaryota"/>
</dbReference>
<dbReference type="GeneTree" id="ENSGT00940000155173"/>
<dbReference type="HOGENOM" id="CLU_001570_5_1_1"/>
<dbReference type="InParanoid" id="P24464"/>
<dbReference type="OMA" id="HVESLIW"/>
<dbReference type="PhylomeDB" id="P24464"/>
<dbReference type="TreeFam" id="TF105088"/>
<dbReference type="BRENDA" id="1.14.14.80">
    <property type="organism ID" value="5301"/>
</dbReference>
<dbReference type="Reactome" id="R-RNO-211935">
    <property type="pathway name" value="Fatty acids"/>
</dbReference>
<dbReference type="Reactome" id="R-RNO-211958">
    <property type="pathway name" value="Miscellaneous substrates"/>
</dbReference>
<dbReference type="Reactome" id="R-RNO-211979">
    <property type="pathway name" value="Eicosanoids"/>
</dbReference>
<dbReference type="Reactome" id="R-RNO-2142691">
    <property type="pathway name" value="Synthesis of Leukotrienes (LT) and Eoxins (EX)"/>
</dbReference>
<dbReference type="Reactome" id="R-RNO-2142816">
    <property type="pathway name" value="Synthesis of (16-20)-hydroxyeicosatetraenoic acids (HETE)"/>
</dbReference>
<dbReference type="UniPathway" id="UPA00199"/>
<dbReference type="PRO" id="PR:P24464"/>
<dbReference type="Proteomes" id="UP000002494">
    <property type="component" value="Chromosome 5"/>
</dbReference>
<dbReference type="Bgee" id="ENSRNOG00000008842">
    <property type="expression patterns" value="Expressed in adult mammalian kidney and 2 other cell types or tissues"/>
</dbReference>
<dbReference type="GO" id="GO:0005789">
    <property type="term" value="C:endoplasmic reticulum membrane"/>
    <property type="evidence" value="ECO:0000314"/>
    <property type="project" value="UniProtKB"/>
</dbReference>
<dbReference type="GO" id="GO:0043231">
    <property type="term" value="C:intracellular membrane-bounded organelle"/>
    <property type="evidence" value="ECO:0000318"/>
    <property type="project" value="GO_Central"/>
</dbReference>
<dbReference type="GO" id="GO:0018685">
    <property type="term" value="F:alkane 1-monooxygenase activity"/>
    <property type="evidence" value="ECO:0000318"/>
    <property type="project" value="GO_Central"/>
</dbReference>
<dbReference type="GO" id="GO:0008391">
    <property type="term" value="F:arachidonate monooxygenase activity"/>
    <property type="evidence" value="ECO:0000318"/>
    <property type="project" value="GO_Central"/>
</dbReference>
<dbReference type="GO" id="GO:0052869">
    <property type="term" value="F:arachidonate omega-hydroxylase activity"/>
    <property type="evidence" value="ECO:0007669"/>
    <property type="project" value="RHEA"/>
</dbReference>
<dbReference type="GO" id="GO:0120250">
    <property type="term" value="F:fatty acid omega-hydroxylase activity"/>
    <property type="evidence" value="ECO:0000314"/>
    <property type="project" value="UniProtKB"/>
</dbReference>
<dbReference type="GO" id="GO:0020037">
    <property type="term" value="F:heme binding"/>
    <property type="evidence" value="ECO:0007669"/>
    <property type="project" value="InterPro"/>
</dbReference>
<dbReference type="GO" id="GO:0005506">
    <property type="term" value="F:iron ion binding"/>
    <property type="evidence" value="ECO:0007669"/>
    <property type="project" value="InterPro"/>
</dbReference>
<dbReference type="GO" id="GO:0004497">
    <property type="term" value="F:monooxygenase activity"/>
    <property type="evidence" value="ECO:0000314"/>
    <property type="project" value="UniProtKB"/>
</dbReference>
<dbReference type="GO" id="GO:0019369">
    <property type="term" value="P:arachidonate metabolic process"/>
    <property type="evidence" value="ECO:0000314"/>
    <property type="project" value="RGD"/>
</dbReference>
<dbReference type="GO" id="GO:0006631">
    <property type="term" value="P:fatty acid metabolic process"/>
    <property type="evidence" value="ECO:0000314"/>
    <property type="project" value="UniProtKB"/>
</dbReference>
<dbReference type="GO" id="GO:0046456">
    <property type="term" value="P:icosanoid biosynthetic process"/>
    <property type="evidence" value="ECO:0000318"/>
    <property type="project" value="GO_Central"/>
</dbReference>
<dbReference type="GO" id="GO:0001822">
    <property type="term" value="P:kidney development"/>
    <property type="evidence" value="ECO:0000270"/>
    <property type="project" value="RGD"/>
</dbReference>
<dbReference type="GO" id="GO:0048252">
    <property type="term" value="P:lauric acid metabolic process"/>
    <property type="evidence" value="ECO:0000314"/>
    <property type="project" value="UniProtKB"/>
</dbReference>
<dbReference type="GO" id="GO:0043651">
    <property type="term" value="P:linoleic acid metabolic process"/>
    <property type="evidence" value="ECO:0000318"/>
    <property type="project" value="GO_Central"/>
</dbReference>
<dbReference type="GO" id="GO:0033574">
    <property type="term" value="P:response to testosterone"/>
    <property type="evidence" value="ECO:0000270"/>
    <property type="project" value="RGD"/>
</dbReference>
<dbReference type="CDD" id="cd20678">
    <property type="entry name" value="CYP4B-like"/>
    <property type="match status" value="1"/>
</dbReference>
<dbReference type="FunFam" id="1.10.630.10:FF:000005">
    <property type="entry name" value="cytochrome P450 4F22 isoform X2"/>
    <property type="match status" value="1"/>
</dbReference>
<dbReference type="Gene3D" id="1.10.630.10">
    <property type="entry name" value="Cytochrome P450"/>
    <property type="match status" value="1"/>
</dbReference>
<dbReference type="InterPro" id="IPR001128">
    <property type="entry name" value="Cyt_P450"/>
</dbReference>
<dbReference type="InterPro" id="IPR017972">
    <property type="entry name" value="Cyt_P450_CS"/>
</dbReference>
<dbReference type="InterPro" id="IPR002401">
    <property type="entry name" value="Cyt_P450_E_grp-I"/>
</dbReference>
<dbReference type="InterPro" id="IPR036396">
    <property type="entry name" value="Cyt_P450_sf"/>
</dbReference>
<dbReference type="InterPro" id="IPR050196">
    <property type="entry name" value="Cytochrome_P450_Monoox"/>
</dbReference>
<dbReference type="PANTHER" id="PTHR24291:SF39">
    <property type="entry name" value="CYTOCHROME P450 4A11-RELATED"/>
    <property type="match status" value="1"/>
</dbReference>
<dbReference type="PANTHER" id="PTHR24291">
    <property type="entry name" value="CYTOCHROME P450 FAMILY 4"/>
    <property type="match status" value="1"/>
</dbReference>
<dbReference type="Pfam" id="PF00067">
    <property type="entry name" value="p450"/>
    <property type="match status" value="1"/>
</dbReference>
<dbReference type="PRINTS" id="PR00463">
    <property type="entry name" value="EP450I"/>
</dbReference>
<dbReference type="PRINTS" id="PR00385">
    <property type="entry name" value="P450"/>
</dbReference>
<dbReference type="SUPFAM" id="SSF48264">
    <property type="entry name" value="Cytochrome P450"/>
    <property type="match status" value="1"/>
</dbReference>
<dbReference type="PROSITE" id="PS00086">
    <property type="entry name" value="CYTOCHROME_P450"/>
    <property type="match status" value="1"/>
</dbReference>
<name>CP4AC_RAT</name>
<proteinExistence type="evidence at protein level"/>
<comment type="function">
    <text evidence="3 4 6">A cytochrome P450 monooxygenase involved in the metabolism of fatty acids. Catalyzes predominantly the oxidation of the terminal carbon (omega-oxidation) of saturated and unsaturated fatty acids (PubMed:10620324, PubMed:10869363, PubMed:15618658). May act as a major omega-hydroxylase for dodecanoic (lauric) acid in kidney (PubMed:10620324, PubMed:10869363, PubMed:15618658). At preglomerular arteries, may participate in omega-hydroxylation of (5Z,8Z,11Z,14Z)-eicosatetraenoic acid (arachidonate) to 20-hydroxyeicosatetraenoic acid (20-HETE), a signaling molecule acting both as vasoconstrictive and natriuretic with overall effect on arterial blood pressure (PubMed:15618658). Can also catalyze the oxidation of the penultimate carbon (omega-1 oxidation) of fatty acids with lower efficiency, displaying a preference for the (R)-stereoisomer (PubMed:10869363). Mechanistically, uses molecular oxygen inserting one oxygen atom into a substrate, and reducing the second into a water molecule, with two electrons provided by NADPH via cytochrome P450 reductase (NADPH--hemoprotein reductase) (PubMed:10620324, PubMed:10869363, PubMed:15618658).</text>
</comment>
<comment type="catalytic activity">
    <reaction evidence="3 4 6">
        <text>an organic molecule + reduced [NADPH--hemoprotein reductase] + O2 = an alcohol + oxidized [NADPH--hemoprotein reductase] + H2O + H(+)</text>
        <dbReference type="Rhea" id="RHEA:17149"/>
        <dbReference type="Rhea" id="RHEA-COMP:11964"/>
        <dbReference type="Rhea" id="RHEA-COMP:11965"/>
        <dbReference type="ChEBI" id="CHEBI:15377"/>
        <dbReference type="ChEBI" id="CHEBI:15378"/>
        <dbReference type="ChEBI" id="CHEBI:15379"/>
        <dbReference type="ChEBI" id="CHEBI:30879"/>
        <dbReference type="ChEBI" id="CHEBI:57618"/>
        <dbReference type="ChEBI" id="CHEBI:58210"/>
        <dbReference type="ChEBI" id="CHEBI:142491"/>
        <dbReference type="EC" id="1.14.14.1"/>
    </reaction>
    <physiologicalReaction direction="left-to-right" evidence="9 10 11">
        <dbReference type="Rhea" id="RHEA:17150"/>
    </physiologicalReaction>
</comment>
<comment type="catalytic activity">
    <reaction evidence="3 4 6">
        <text>dodecanoate + reduced [NADPH--hemoprotein reductase] + O2 = 12-hydroxydodecanoate + oxidized [NADPH--hemoprotein reductase] + H2O + H(+)</text>
        <dbReference type="Rhea" id="RHEA:38947"/>
        <dbReference type="Rhea" id="RHEA-COMP:11964"/>
        <dbReference type="Rhea" id="RHEA-COMP:11965"/>
        <dbReference type="ChEBI" id="CHEBI:15377"/>
        <dbReference type="ChEBI" id="CHEBI:15378"/>
        <dbReference type="ChEBI" id="CHEBI:15379"/>
        <dbReference type="ChEBI" id="CHEBI:18262"/>
        <dbReference type="ChEBI" id="CHEBI:36204"/>
        <dbReference type="ChEBI" id="CHEBI:57618"/>
        <dbReference type="ChEBI" id="CHEBI:58210"/>
    </reaction>
    <physiologicalReaction direction="left-to-right" evidence="9 10 11">
        <dbReference type="Rhea" id="RHEA:38948"/>
    </physiologicalReaction>
</comment>
<comment type="catalytic activity">
    <reaction evidence="4">
        <text>dodecanoate + reduced [NADPH--hemoprotein reductase] + O2 = (11R)-hydroxydodecanoate + oxidized [NADPH--hemoprotein reductase] + H2O + H(+)</text>
        <dbReference type="Rhea" id="RHEA:41724"/>
        <dbReference type="Rhea" id="RHEA-COMP:11964"/>
        <dbReference type="Rhea" id="RHEA-COMP:11965"/>
        <dbReference type="ChEBI" id="CHEBI:15377"/>
        <dbReference type="ChEBI" id="CHEBI:15378"/>
        <dbReference type="ChEBI" id="CHEBI:15379"/>
        <dbReference type="ChEBI" id="CHEBI:18262"/>
        <dbReference type="ChEBI" id="CHEBI:57618"/>
        <dbReference type="ChEBI" id="CHEBI:58210"/>
        <dbReference type="ChEBI" id="CHEBI:78423"/>
    </reaction>
    <physiologicalReaction direction="left-to-right" evidence="10">
        <dbReference type="Rhea" id="RHEA:41725"/>
    </physiologicalReaction>
</comment>
<comment type="catalytic activity">
    <reaction evidence="6">
        <text>(5Z,8Z,11Z,14Z)-eicosatetraenoate + reduced [NADPH--hemoprotein reductase] + O2 = 20-hydroxy-(5Z,8Z,11Z,14Z)-eicosatetraenoate + oxidized [NADPH--hemoprotein reductase] + H2O + H(+)</text>
        <dbReference type="Rhea" id="RHEA:39755"/>
        <dbReference type="Rhea" id="RHEA-COMP:11964"/>
        <dbReference type="Rhea" id="RHEA-COMP:11965"/>
        <dbReference type="ChEBI" id="CHEBI:15377"/>
        <dbReference type="ChEBI" id="CHEBI:15378"/>
        <dbReference type="ChEBI" id="CHEBI:15379"/>
        <dbReference type="ChEBI" id="CHEBI:32395"/>
        <dbReference type="ChEBI" id="CHEBI:57618"/>
        <dbReference type="ChEBI" id="CHEBI:58210"/>
        <dbReference type="ChEBI" id="CHEBI:76624"/>
    </reaction>
    <physiologicalReaction direction="left-to-right" evidence="11">
        <dbReference type="Rhea" id="RHEA:39756"/>
    </physiologicalReaction>
</comment>
<comment type="catalytic activity">
    <reaction evidence="6">
        <text>prostaglandin A1 + reduced [NADPH--hemoprotein reductase] + O2 = 20-hydroxy prostaglandin A1 + oxidized [NADPH--hemoprotein reductase] + H2O + H(+)</text>
        <dbReference type="Rhea" id="RHEA:52524"/>
        <dbReference type="Rhea" id="RHEA-COMP:11964"/>
        <dbReference type="Rhea" id="RHEA-COMP:11965"/>
        <dbReference type="ChEBI" id="CHEBI:15377"/>
        <dbReference type="ChEBI" id="CHEBI:15378"/>
        <dbReference type="ChEBI" id="CHEBI:15379"/>
        <dbReference type="ChEBI" id="CHEBI:57398"/>
        <dbReference type="ChEBI" id="CHEBI:57618"/>
        <dbReference type="ChEBI" id="CHEBI:58210"/>
        <dbReference type="ChEBI" id="CHEBI:136663"/>
    </reaction>
    <physiologicalReaction direction="left-to-right" evidence="11">
        <dbReference type="Rhea" id="RHEA:52525"/>
    </physiologicalReaction>
</comment>
<comment type="cofactor">
    <cofactor evidence="5">
        <name>heme</name>
        <dbReference type="ChEBI" id="CHEBI:30413"/>
    </cofactor>
</comment>
<comment type="activity regulation">
    <text evidence="6">Activated by cytochrome b5 and phosphatidylserine.</text>
</comment>
<comment type="pathway">
    <text evidence="11">Lipid metabolism; fatty acid metabolism.</text>
</comment>
<comment type="subcellular location">
    <subcellularLocation>
        <location evidence="6">Endoplasmic reticulum membrane</location>
        <topology evidence="2">Multi-pass membrane protein</topology>
    </subcellularLocation>
    <subcellularLocation>
        <location evidence="6">Microsome membrane</location>
        <topology evidence="2">Multi-pass membrane protein</topology>
    </subcellularLocation>
</comment>
<comment type="tissue specificity">
    <text evidence="6">Expressed at proximal straight tubules and preglomerular arteries of the outer medulla as well in the cortex regions of kidney (at protein level).</text>
</comment>
<comment type="similarity">
    <text evidence="8">Belongs to the cytochrome P450 family.</text>
</comment>
<gene>
    <name type="primary">Cyp4a12</name>
    <name type="synonym">Cyp4a-8</name>
    <name evidence="7" type="synonym">Cyp4a8</name>
</gene>
<feature type="chain" id="PRO_0000051818" description="Cytochrome P450 4A12">
    <location>
        <begin position="1"/>
        <end position="508"/>
    </location>
</feature>
<feature type="transmembrane region" description="Helical" evidence="2">
    <location>
        <begin position="10"/>
        <end position="30"/>
    </location>
</feature>
<feature type="transmembrane region" description="Helical" evidence="2">
    <location>
        <begin position="120"/>
        <end position="140"/>
    </location>
</feature>
<feature type="binding site" description="covalent" evidence="5">
    <location>
        <position position="319"/>
    </location>
    <ligand>
        <name>heme</name>
        <dbReference type="ChEBI" id="CHEBI:30413"/>
    </ligand>
</feature>
<feature type="binding site" description="axial binding residue" evidence="5">
    <location>
        <position position="455"/>
    </location>
    <ligand>
        <name>heme</name>
        <dbReference type="ChEBI" id="CHEBI:30413"/>
    </ligand>
    <ligandPart>
        <name>Fe</name>
        <dbReference type="ChEBI" id="CHEBI:18248"/>
    </ligandPart>
</feature>
<feature type="modified residue" description="Phosphoserine" evidence="1">
    <location>
        <position position="438"/>
    </location>
</feature>
<feature type="sequence conflict" description="In Ref. 1; AAA63485." evidence="8" ref="1">
    <original>F</original>
    <variation>L</variation>
    <location>
        <position position="32"/>
    </location>
</feature>
<feature type="sequence conflict" description="In Ref. 1; AAA63485." evidence="8" ref="1">
    <original>E</original>
    <variation>D</variation>
    <location>
        <position position="69"/>
    </location>
</feature>
<feature type="sequence conflict" description="In Ref. 1; AAA63485." evidence="8" ref="1">
    <original>D</original>
    <variation>E</variation>
    <location>
        <position position="101"/>
    </location>
</feature>
<feature type="sequence conflict" description="In Ref. 1; AAA63485." evidence="8" ref="1">
    <original>SHH</original>
    <variation>AHG</variation>
    <location>
        <begin position="114"/>
        <end position="116"/>
    </location>
</feature>
<feature type="sequence conflict" description="In Ref. 1; AAA63485." evidence="8" ref="1">
    <original>S</original>
    <variation>F</variation>
    <location>
        <position position="226"/>
    </location>
</feature>
<feature type="sequence conflict" description="In Ref. 1; AAA63485." evidence="8" ref="1">
    <original>IRNI</original>
    <variation>VQNM</variation>
    <location>
        <begin position="230"/>
        <end position="233"/>
    </location>
</feature>
<feature type="sequence conflict" description="In Ref. 1; AAA63485." evidence="8" ref="1">
    <original>I</original>
    <variation>F</variation>
    <location>
        <position position="239"/>
    </location>
</feature>
<feature type="sequence conflict" description="In Ref. 1; AAA63485." evidence="8" ref="1">
    <original>RS</original>
    <variation>HN</variation>
    <location>
        <begin position="251"/>
        <end position="252"/>
    </location>
</feature>
<feature type="sequence conflict" description="In Ref. 1; AAA63485." evidence="8" ref="1">
    <original>EH</original>
    <variation>DY</variation>
    <location>
        <begin position="259"/>
        <end position="260"/>
    </location>
</feature>
<reference key="1">
    <citation type="journal article" date="1990" name="DNA Cell Biol.">
        <title>Cloning and characterization of a novel member of the cytochrome P450 subfamily IVA in rat prostate.</title>
        <authorList>
            <person name="Stroemstedt M."/>
            <person name="Hayashi S."/>
            <person name="Zaphiropoulos P.G."/>
            <person name="Gustafsson J.-A."/>
        </authorList>
    </citation>
    <scope>NUCLEOTIDE SEQUENCE [MRNA]</scope>
    <source>
        <tissue>Prostate</tissue>
    </source>
</reference>
<reference key="2">
    <citation type="journal article" date="2004" name="Genome Res.">
        <title>The status, quality, and expansion of the NIH full-length cDNA project: the Mammalian Gene Collection (MGC).</title>
        <authorList>
            <consortium name="The MGC Project Team"/>
        </authorList>
    </citation>
    <scope>NUCLEOTIDE SEQUENCE [LARGE SCALE MRNA]</scope>
    <source>
        <tissue>Kidney</tissue>
    </source>
</reference>
<reference key="3">
    <citation type="journal article" date="2000" name="Arch. Biochem. Biophys.">
        <title>Structural determination of the substrate specificities and regioselectivities of the rat and human fatty acid omega-hydroxylases.</title>
        <authorList>
            <person name="Hoch U."/>
            <person name="Zhang Z."/>
            <person name="Kroetz D.L."/>
            <person name="Ortiz de Montellano P.R."/>
        </authorList>
    </citation>
    <scope>FUNCTION</scope>
    <scope>CATALYTIC ACTIVITY</scope>
</reference>
<reference key="4">
    <citation type="journal article" date="2000" name="J. Biol. Chem.">
        <title>Molecular basis for the omega-regiospecificity of the CYP4A2 and CYP4A3 fatty acid hydroxylases.</title>
        <authorList>
            <person name="Hoch U."/>
            <person name="Falck J.R."/>
            <person name="de Montellano P.R."/>
        </authorList>
    </citation>
    <scope>FUNCTION</scope>
    <scope>CATALYTIC ACTIVITY</scope>
</reference>
<reference key="5">
    <citation type="journal article" date="2001" name="J. Biol. Chem.">
        <title>Covalently linked heme in cytochrome P4504A fatty acid hydroxylases.</title>
        <authorList>
            <person name="Hoch U."/>
            <person name="Ortiz de Montellano P.R."/>
        </authorList>
    </citation>
    <scope>COVALENT HEME ATTACHMENT</scope>
</reference>
<reference key="6">
    <citation type="journal article" date="2002" name="Drug Metab. Pharmacokinet.">
        <title>Contribution of CYP4A8 to the formation of 20-hydroxyeicosatetraenoic acid from arachidonic acid in rat kidney.</title>
        <authorList>
            <person name="Yamaguchi Y."/>
            <person name="Kirita S."/>
            <person name="Hasegawa H."/>
            <person name="Aoyama J."/>
            <person name="Imaoka S."/>
            <person name="Minamiyama S."/>
            <person name="Funae Y."/>
            <person name="Baba T."/>
            <person name="Matsubara T."/>
        </authorList>
    </citation>
    <scope>FUNCTION</scope>
    <scope>CATALYTIC ACTIVITY</scope>
    <scope>ACTIVITY REGULATION</scope>
    <scope>PATHWAY</scope>
    <scope>SUBCELLULAR LOCATION</scope>
    <scope>TISSUE SPECIFICITY</scope>
</reference>
<organism>
    <name type="scientific">Rattus norvegicus</name>
    <name type="common">Rat</name>
    <dbReference type="NCBI Taxonomy" id="10116"/>
    <lineage>
        <taxon>Eukaryota</taxon>
        <taxon>Metazoa</taxon>
        <taxon>Chordata</taxon>
        <taxon>Craniata</taxon>
        <taxon>Vertebrata</taxon>
        <taxon>Euteleostomi</taxon>
        <taxon>Mammalia</taxon>
        <taxon>Eutheria</taxon>
        <taxon>Euarchontoglires</taxon>
        <taxon>Glires</taxon>
        <taxon>Rodentia</taxon>
        <taxon>Myomorpha</taxon>
        <taxon>Muroidea</taxon>
        <taxon>Muridae</taxon>
        <taxon>Murinae</taxon>
        <taxon>Rattus</taxon>
    </lineage>
</organism>
<protein>
    <recommendedName>
        <fullName>Cytochrome P450 4A12</fullName>
        <ecNumber evidence="3 4 6">1.14.14.1</ecNumber>
    </recommendedName>
    <alternativeName>
        <fullName>CYPIVA12</fullName>
    </alternativeName>
    <alternativeName>
        <fullName>CYPIVA8</fullName>
    </alternativeName>
    <alternativeName>
        <fullName>Cytochrome P450-KP1</fullName>
    </alternativeName>
    <alternativeName>
        <fullName>Cytochrome P450-PP1</fullName>
    </alternativeName>
</protein>
<keyword id="KW-0256">Endoplasmic reticulum</keyword>
<keyword id="KW-0349">Heme</keyword>
<keyword id="KW-0408">Iron</keyword>
<keyword id="KW-0443">Lipid metabolism</keyword>
<keyword id="KW-0472">Membrane</keyword>
<keyword id="KW-0479">Metal-binding</keyword>
<keyword id="KW-0492">Microsome</keyword>
<keyword id="KW-0503">Monooxygenase</keyword>
<keyword id="KW-0560">Oxidoreductase</keyword>
<keyword id="KW-0597">Phosphoprotein</keyword>
<keyword id="KW-1185">Reference proteome</keyword>
<keyword id="KW-0812">Transmembrane</keyword>
<keyword id="KW-1133">Transmembrane helix</keyword>
<sequence>MSGSALSFTIFPGSILGFLQIATVLTVLLLLFKTAQFYLHRRWLLRATQQFPSPPSHWFFGHKIPKDQEFQDILTRVKNFPSACPQWLWGSNVRIQVYDPDYMKLILGRSDPKSHHSYRFLAPWIGYGLLLLNGQTWFQHRRMLTPAFHYDTLKPYVGIMADSVRIMLDKWEQIVGQDSTLEIFQHITLMTLDTIMKCAFSQEGSVQLDRKYKSYIKAVEDLNNLSFFRIRNIFHQNDIIYSLSSNGRKARSAWQLAHEHTDQVIKSRKAQLQDEEELQKVKQKRRLDFLDILLFARIENGSSLSDKDLRAEVDTFMFEGHDTTASGISWIFYALATNPEHQQGCRKEIQSLLGDGASITWDDLDKMPYTTMCIKEALRIYPPVTAVSRMLSTPVTFPDGRSLPKGITVMLSFYGLHHNPTVWPNPEVFDPYRFAPESSRHSHSFLPFSGGARNCIGKQFAMNELKVAVALTLLRFELLPDPTRIPIPIPRLVLKSKNGIYLRLKKLQ</sequence>